<feature type="signal peptide" evidence="2">
    <location>
        <begin position="1"/>
        <end position="21"/>
    </location>
</feature>
<feature type="chain" id="PRO_0000269007" description="Classical arabinogalactan protein 26">
    <location>
        <begin position="22"/>
        <end position="108"/>
    </location>
</feature>
<feature type="propeptide" id="PRO_0000269008" description="Removed in mature form" evidence="2">
    <location>
        <begin position="109"/>
        <end position="136"/>
    </location>
</feature>
<feature type="region of interest" description="Disordered" evidence="3">
    <location>
        <begin position="38"/>
        <end position="95"/>
    </location>
</feature>
<feature type="compositionally biased region" description="Polar residues" evidence="3">
    <location>
        <begin position="40"/>
        <end position="53"/>
    </location>
</feature>
<feature type="compositionally biased region" description="Low complexity" evidence="3">
    <location>
        <begin position="59"/>
        <end position="81"/>
    </location>
</feature>
<feature type="lipid moiety-binding region" description="GPI-anchor amidated serine" evidence="2">
    <location>
        <position position="108"/>
    </location>
</feature>
<feature type="sequence conflict" description="In Ref. 3; AAL77708/AAK60279." evidence="4" ref="3">
    <original>P</original>
    <variation>T</variation>
    <location>
        <position position="76"/>
    </location>
</feature>
<evidence type="ECO:0000250" key="1"/>
<evidence type="ECO:0000255" key="2"/>
<evidence type="ECO:0000256" key="3">
    <source>
        <dbReference type="SAM" id="MobiDB-lite"/>
    </source>
</evidence>
<evidence type="ECO:0000305" key="4"/>
<accession>Q94F57</accession>
<accession>O82260</accession>
<sequence>MSVSLFTAFTVLSLCLHTSTSEFQLSTISAAPSFLPEAPSSFSASTPAMSPDTSPLFPTPGSSEMSPSPSESSIMPTIPSSLSPPNPDAVTPDPLLEVSPVGSPLPASSSVCLVSSQLSSLLLVLLMLLLAFCSFF</sequence>
<proteinExistence type="evidence at transcript level"/>
<gene>
    <name type="primary">AGP26</name>
    <name type="ordered locus">At2g47930</name>
    <name type="ORF">F17A22</name>
    <name type="ORF">T9J23.8</name>
</gene>
<dbReference type="EMBL" id="AC005309">
    <property type="protein sequence ID" value="AAC63647.1"/>
    <property type="molecule type" value="Genomic_DNA"/>
</dbReference>
<dbReference type="EMBL" id="AC006072">
    <property type="protein sequence ID" value="AAM15130.1"/>
    <property type="molecule type" value="Genomic_DNA"/>
</dbReference>
<dbReference type="EMBL" id="CP002685">
    <property type="protein sequence ID" value="AEC10913.1"/>
    <property type="molecule type" value="Genomic_DNA"/>
</dbReference>
<dbReference type="EMBL" id="AF385686">
    <property type="protein sequence ID" value="AAK60279.1"/>
    <property type="molecule type" value="mRNA"/>
</dbReference>
<dbReference type="EMBL" id="AY078007">
    <property type="protein sequence ID" value="AAL77708.1"/>
    <property type="molecule type" value="mRNA"/>
</dbReference>
<dbReference type="PIR" id="C84921">
    <property type="entry name" value="C84921"/>
</dbReference>
<dbReference type="RefSeq" id="NP_566114.1">
    <property type="nucleotide sequence ID" value="NM_130360.3"/>
</dbReference>
<dbReference type="BioGRID" id="4740">
    <property type="interactions" value="3"/>
</dbReference>
<dbReference type="FunCoup" id="Q94F57">
    <property type="interactions" value="8"/>
</dbReference>
<dbReference type="IntAct" id="Q94F57">
    <property type="interactions" value="3"/>
</dbReference>
<dbReference type="STRING" id="3702.Q94F57"/>
<dbReference type="GlyGen" id="Q94F57">
    <property type="glycosylation" value="1 site"/>
</dbReference>
<dbReference type="PaxDb" id="3702-AT2G47930.1"/>
<dbReference type="EnsemblPlants" id="AT2G47930.1">
    <property type="protein sequence ID" value="AT2G47930.1"/>
    <property type="gene ID" value="AT2G47930"/>
</dbReference>
<dbReference type="GeneID" id="819405"/>
<dbReference type="Gramene" id="AT2G47930.1">
    <property type="protein sequence ID" value="AT2G47930.1"/>
    <property type="gene ID" value="AT2G47930"/>
</dbReference>
<dbReference type="KEGG" id="ath:AT2G47930"/>
<dbReference type="Araport" id="AT2G47930"/>
<dbReference type="TAIR" id="AT2G47930">
    <property type="gene designation" value="AGP26"/>
</dbReference>
<dbReference type="eggNOG" id="ENOG502S95S">
    <property type="taxonomic scope" value="Eukaryota"/>
</dbReference>
<dbReference type="HOGENOM" id="CLU_121177_0_0_1"/>
<dbReference type="InParanoid" id="Q94F57"/>
<dbReference type="OMA" id="IHAVQYS"/>
<dbReference type="OrthoDB" id="1113946at2759"/>
<dbReference type="PRO" id="PR:Q94F57"/>
<dbReference type="Proteomes" id="UP000006548">
    <property type="component" value="Chromosome 2"/>
</dbReference>
<dbReference type="ExpressionAtlas" id="Q94F57">
    <property type="expression patterns" value="baseline and differential"/>
</dbReference>
<dbReference type="GO" id="GO:0005886">
    <property type="term" value="C:plasma membrane"/>
    <property type="evidence" value="ECO:0007669"/>
    <property type="project" value="UniProtKB-SubCell"/>
</dbReference>
<dbReference type="GO" id="GO:0098552">
    <property type="term" value="C:side of membrane"/>
    <property type="evidence" value="ECO:0007669"/>
    <property type="project" value="UniProtKB-KW"/>
</dbReference>
<dbReference type="InterPro" id="IPR039346">
    <property type="entry name" value="AGP25/26"/>
</dbReference>
<dbReference type="PANTHER" id="PTHR35725">
    <property type="entry name" value="CLASSICAL ARABINOGALACTAN PROTEIN 26"/>
    <property type="match status" value="1"/>
</dbReference>
<dbReference type="PANTHER" id="PTHR35725:SF4">
    <property type="entry name" value="CLASSICAL ARABINOGALACTAN PROTEIN 26"/>
    <property type="match status" value="1"/>
</dbReference>
<organism>
    <name type="scientific">Arabidopsis thaliana</name>
    <name type="common">Mouse-ear cress</name>
    <dbReference type="NCBI Taxonomy" id="3702"/>
    <lineage>
        <taxon>Eukaryota</taxon>
        <taxon>Viridiplantae</taxon>
        <taxon>Streptophyta</taxon>
        <taxon>Embryophyta</taxon>
        <taxon>Tracheophyta</taxon>
        <taxon>Spermatophyta</taxon>
        <taxon>Magnoliopsida</taxon>
        <taxon>eudicotyledons</taxon>
        <taxon>Gunneridae</taxon>
        <taxon>Pentapetalae</taxon>
        <taxon>rosids</taxon>
        <taxon>malvids</taxon>
        <taxon>Brassicales</taxon>
        <taxon>Brassicaceae</taxon>
        <taxon>Camelineae</taxon>
        <taxon>Arabidopsis</taxon>
    </lineage>
</organism>
<protein>
    <recommendedName>
        <fullName>Classical arabinogalactan protein 26</fullName>
    </recommendedName>
</protein>
<keyword id="KW-1003">Cell membrane</keyword>
<keyword id="KW-0325">Glycoprotein</keyword>
<keyword id="KW-0336">GPI-anchor</keyword>
<keyword id="KW-0449">Lipoprotein</keyword>
<keyword id="KW-0472">Membrane</keyword>
<keyword id="KW-0654">Proteoglycan</keyword>
<keyword id="KW-1185">Reference proteome</keyword>
<keyword id="KW-0732">Signal</keyword>
<comment type="function">
    <text>Proteoglycan that seems to be implicated in diverse developmental roles such as differentiation, cell-cell recognition, embryogenesis and programmed cell death.</text>
</comment>
<comment type="subcellular location">
    <subcellularLocation>
        <location evidence="4">Cell membrane</location>
        <topology evidence="4">Lipid-anchor</topology>
        <topology evidence="4">GPI-anchor</topology>
    </subcellularLocation>
</comment>
<comment type="PTM">
    <text evidence="1">O-glycosylated on the hydroxyproline residues.</text>
</comment>
<comment type="similarity">
    <text evidence="4">Belongs to the classical AGP family.</text>
</comment>
<reference key="1">
    <citation type="journal article" date="1999" name="Nature">
        <title>Sequence and analysis of chromosome 2 of the plant Arabidopsis thaliana.</title>
        <authorList>
            <person name="Lin X."/>
            <person name="Kaul S."/>
            <person name="Rounsley S.D."/>
            <person name="Shea T.P."/>
            <person name="Benito M.-I."/>
            <person name="Town C.D."/>
            <person name="Fujii C.Y."/>
            <person name="Mason T.M."/>
            <person name="Bowman C.L."/>
            <person name="Barnstead M.E."/>
            <person name="Feldblyum T.V."/>
            <person name="Buell C.R."/>
            <person name="Ketchum K.A."/>
            <person name="Lee J.J."/>
            <person name="Ronning C.M."/>
            <person name="Koo H.L."/>
            <person name="Moffat K.S."/>
            <person name="Cronin L.A."/>
            <person name="Shen M."/>
            <person name="Pai G."/>
            <person name="Van Aken S."/>
            <person name="Umayam L."/>
            <person name="Tallon L.J."/>
            <person name="Gill J.E."/>
            <person name="Adams M.D."/>
            <person name="Carrera A.J."/>
            <person name="Creasy T.H."/>
            <person name="Goodman H.M."/>
            <person name="Somerville C.R."/>
            <person name="Copenhaver G.P."/>
            <person name="Preuss D."/>
            <person name="Nierman W.C."/>
            <person name="White O."/>
            <person name="Eisen J.A."/>
            <person name="Salzberg S.L."/>
            <person name="Fraser C.M."/>
            <person name="Venter J.C."/>
        </authorList>
    </citation>
    <scope>NUCLEOTIDE SEQUENCE [LARGE SCALE GENOMIC DNA]</scope>
    <source>
        <strain>cv. Columbia</strain>
    </source>
</reference>
<reference key="2">
    <citation type="journal article" date="2017" name="Plant J.">
        <title>Araport11: a complete reannotation of the Arabidopsis thaliana reference genome.</title>
        <authorList>
            <person name="Cheng C.Y."/>
            <person name="Krishnakumar V."/>
            <person name="Chan A.P."/>
            <person name="Thibaud-Nissen F."/>
            <person name="Schobel S."/>
            <person name="Town C.D."/>
        </authorList>
    </citation>
    <scope>GENOME REANNOTATION</scope>
    <source>
        <strain>cv. Columbia</strain>
    </source>
</reference>
<reference key="3">
    <citation type="journal article" date="2003" name="Science">
        <title>Empirical analysis of transcriptional activity in the Arabidopsis genome.</title>
        <authorList>
            <person name="Yamada K."/>
            <person name="Lim J."/>
            <person name="Dale J.M."/>
            <person name="Chen H."/>
            <person name="Shinn P."/>
            <person name="Palm C.J."/>
            <person name="Southwick A.M."/>
            <person name="Wu H.C."/>
            <person name="Kim C.J."/>
            <person name="Nguyen M."/>
            <person name="Pham P.K."/>
            <person name="Cheuk R.F."/>
            <person name="Karlin-Newmann G."/>
            <person name="Liu S.X."/>
            <person name="Lam B."/>
            <person name="Sakano H."/>
            <person name="Wu T."/>
            <person name="Yu G."/>
            <person name="Miranda M."/>
            <person name="Quach H.L."/>
            <person name="Tripp M."/>
            <person name="Chang C.H."/>
            <person name="Lee J.M."/>
            <person name="Toriumi M.J."/>
            <person name="Chan M.M."/>
            <person name="Tang C.C."/>
            <person name="Onodera C.S."/>
            <person name="Deng J.M."/>
            <person name="Akiyama K."/>
            <person name="Ansari Y."/>
            <person name="Arakawa T."/>
            <person name="Banh J."/>
            <person name="Banno F."/>
            <person name="Bowser L."/>
            <person name="Brooks S.Y."/>
            <person name="Carninci P."/>
            <person name="Chao Q."/>
            <person name="Choy N."/>
            <person name="Enju A."/>
            <person name="Goldsmith A.D."/>
            <person name="Gurjal M."/>
            <person name="Hansen N.F."/>
            <person name="Hayashizaki Y."/>
            <person name="Johnson-Hopson C."/>
            <person name="Hsuan V.W."/>
            <person name="Iida K."/>
            <person name="Karnes M."/>
            <person name="Khan S."/>
            <person name="Koesema E."/>
            <person name="Ishida J."/>
            <person name="Jiang P.X."/>
            <person name="Jones T."/>
            <person name="Kawai J."/>
            <person name="Kamiya A."/>
            <person name="Meyers C."/>
            <person name="Nakajima M."/>
            <person name="Narusaka M."/>
            <person name="Seki M."/>
            <person name="Sakurai T."/>
            <person name="Satou M."/>
            <person name="Tamse R."/>
            <person name="Vaysberg M."/>
            <person name="Wallender E.K."/>
            <person name="Wong C."/>
            <person name="Yamamura Y."/>
            <person name="Yuan S."/>
            <person name="Shinozaki K."/>
            <person name="Davis R.W."/>
            <person name="Theologis A."/>
            <person name="Ecker J.R."/>
        </authorList>
    </citation>
    <scope>NUCLEOTIDE SEQUENCE [LARGE SCALE MRNA]</scope>
    <source>
        <strain>cv. Columbia</strain>
    </source>
</reference>
<reference key="4">
    <citation type="journal article" date="2002" name="Plant Physiol.">
        <title>Using genomic resources to guide research directions. The arabinogalactan protein gene family as a test case.</title>
        <authorList>
            <person name="Schultz C.J."/>
            <person name="Rumsewicz M.P."/>
            <person name="Johnson K.L."/>
            <person name="Jones B.J."/>
            <person name="Gaspar Y.M."/>
            <person name="Bacic A."/>
        </authorList>
    </citation>
    <scope>GENE FAMILY</scope>
    <scope>NOMENCLATURE</scope>
</reference>
<name>AGP26_ARATH</name>